<reference key="1">
    <citation type="journal article" date="2008" name="BMC Genomics">
        <title>Complete genome of Phenylobacterium zucineum - a novel facultative intracellular bacterium isolated from human erythroleukemia cell line K562.</title>
        <authorList>
            <person name="Luo Y."/>
            <person name="Xu X."/>
            <person name="Ding Z."/>
            <person name="Liu Z."/>
            <person name="Zhang B."/>
            <person name="Yan Z."/>
            <person name="Sun J."/>
            <person name="Hu S."/>
            <person name="Hu X."/>
        </authorList>
    </citation>
    <scope>NUCLEOTIDE SEQUENCE [LARGE SCALE GENOMIC DNA]</scope>
    <source>
        <strain>HLK1</strain>
    </source>
</reference>
<keyword id="KW-1185">Reference proteome</keyword>
<keyword id="KW-0687">Ribonucleoprotein</keyword>
<keyword id="KW-0689">Ribosomal protein</keyword>
<keyword id="KW-0694">RNA-binding</keyword>
<keyword id="KW-0699">rRNA-binding</keyword>
<protein>
    <recommendedName>
        <fullName evidence="1">Large ribosomal subunit protein uL6</fullName>
    </recommendedName>
    <alternativeName>
        <fullName evidence="3">50S ribosomal protein L6</fullName>
    </alternativeName>
</protein>
<comment type="function">
    <text evidence="1">This protein binds to the 23S rRNA, and is important in its secondary structure. It is located near the subunit interface in the base of the L7/L12 stalk, and near the tRNA binding site of the peptidyltransferase center.</text>
</comment>
<comment type="subunit">
    <text evidence="1">Part of the 50S ribosomal subunit.</text>
</comment>
<comment type="similarity">
    <text evidence="1">Belongs to the universal ribosomal protein uL6 family.</text>
</comment>
<organism>
    <name type="scientific">Phenylobacterium zucineum (strain HLK1)</name>
    <dbReference type="NCBI Taxonomy" id="450851"/>
    <lineage>
        <taxon>Bacteria</taxon>
        <taxon>Pseudomonadati</taxon>
        <taxon>Pseudomonadota</taxon>
        <taxon>Alphaproteobacteria</taxon>
        <taxon>Caulobacterales</taxon>
        <taxon>Caulobacteraceae</taxon>
        <taxon>Phenylobacterium</taxon>
    </lineage>
</organism>
<proteinExistence type="inferred from homology"/>
<evidence type="ECO:0000255" key="1">
    <source>
        <dbReference type="HAMAP-Rule" id="MF_01365"/>
    </source>
</evidence>
<evidence type="ECO:0000256" key="2">
    <source>
        <dbReference type="SAM" id="MobiDB-lite"/>
    </source>
</evidence>
<evidence type="ECO:0000305" key="3"/>
<name>RL6_PHEZH</name>
<sequence length="177" mass="19174">MSRIGKKAVAVPSGVTVTIDGQTVTVKGPKGQLAWTVAEEIEVRQEGAEILLSKRDESTRAQAMWGLSRTLVNNMVVGVTQGYEQTLELVGVGYRAAMKGQALSMQLGFSHDVDVAPPAGITFATPKQTEIKISGIDKQLVGETAARIRRLRPPEPYKGKGVRYAGENVRRKEGKKK</sequence>
<feature type="chain" id="PRO_1000144026" description="Large ribosomal subunit protein uL6">
    <location>
        <begin position="1"/>
        <end position="177"/>
    </location>
</feature>
<feature type="region of interest" description="Disordered" evidence="2">
    <location>
        <begin position="151"/>
        <end position="177"/>
    </location>
</feature>
<accession>B4R8N2</accession>
<gene>
    <name evidence="1" type="primary">rplF</name>
    <name type="ordered locus">PHZ_c1245</name>
</gene>
<dbReference type="EMBL" id="CP000747">
    <property type="protein sequence ID" value="ACG77659.1"/>
    <property type="molecule type" value="Genomic_DNA"/>
</dbReference>
<dbReference type="RefSeq" id="WP_012521803.1">
    <property type="nucleotide sequence ID" value="NC_011144.1"/>
</dbReference>
<dbReference type="SMR" id="B4R8N2"/>
<dbReference type="STRING" id="450851.PHZ_c1245"/>
<dbReference type="KEGG" id="pzu:PHZ_c1245"/>
<dbReference type="eggNOG" id="COG0097">
    <property type="taxonomic scope" value="Bacteria"/>
</dbReference>
<dbReference type="HOGENOM" id="CLU_065464_1_2_5"/>
<dbReference type="OrthoDB" id="9805007at2"/>
<dbReference type="Proteomes" id="UP000001868">
    <property type="component" value="Chromosome"/>
</dbReference>
<dbReference type="GO" id="GO:0022625">
    <property type="term" value="C:cytosolic large ribosomal subunit"/>
    <property type="evidence" value="ECO:0007669"/>
    <property type="project" value="TreeGrafter"/>
</dbReference>
<dbReference type="GO" id="GO:0019843">
    <property type="term" value="F:rRNA binding"/>
    <property type="evidence" value="ECO:0007669"/>
    <property type="project" value="UniProtKB-UniRule"/>
</dbReference>
<dbReference type="GO" id="GO:0003735">
    <property type="term" value="F:structural constituent of ribosome"/>
    <property type="evidence" value="ECO:0007669"/>
    <property type="project" value="InterPro"/>
</dbReference>
<dbReference type="GO" id="GO:0002181">
    <property type="term" value="P:cytoplasmic translation"/>
    <property type="evidence" value="ECO:0007669"/>
    <property type="project" value="TreeGrafter"/>
</dbReference>
<dbReference type="FunFam" id="3.90.930.12:FF:000001">
    <property type="entry name" value="50S ribosomal protein L6"/>
    <property type="match status" value="1"/>
</dbReference>
<dbReference type="FunFam" id="3.90.930.12:FF:000002">
    <property type="entry name" value="50S ribosomal protein L6"/>
    <property type="match status" value="1"/>
</dbReference>
<dbReference type="Gene3D" id="3.90.930.12">
    <property type="entry name" value="Ribosomal protein L6, alpha-beta domain"/>
    <property type="match status" value="2"/>
</dbReference>
<dbReference type="HAMAP" id="MF_01365_B">
    <property type="entry name" value="Ribosomal_uL6_B"/>
    <property type="match status" value="1"/>
</dbReference>
<dbReference type="InterPro" id="IPR000702">
    <property type="entry name" value="Ribosomal_uL6-like"/>
</dbReference>
<dbReference type="InterPro" id="IPR036789">
    <property type="entry name" value="Ribosomal_uL6-like_a/b-dom_sf"/>
</dbReference>
<dbReference type="InterPro" id="IPR020040">
    <property type="entry name" value="Ribosomal_uL6_a/b-dom"/>
</dbReference>
<dbReference type="InterPro" id="IPR019906">
    <property type="entry name" value="Ribosomal_uL6_bac-type"/>
</dbReference>
<dbReference type="InterPro" id="IPR002358">
    <property type="entry name" value="Ribosomal_uL6_CS"/>
</dbReference>
<dbReference type="NCBIfam" id="TIGR03654">
    <property type="entry name" value="L6_bact"/>
    <property type="match status" value="1"/>
</dbReference>
<dbReference type="PANTHER" id="PTHR11655">
    <property type="entry name" value="60S/50S RIBOSOMAL PROTEIN L6/L9"/>
    <property type="match status" value="1"/>
</dbReference>
<dbReference type="PANTHER" id="PTHR11655:SF14">
    <property type="entry name" value="LARGE RIBOSOMAL SUBUNIT PROTEIN UL6M"/>
    <property type="match status" value="1"/>
</dbReference>
<dbReference type="Pfam" id="PF00347">
    <property type="entry name" value="Ribosomal_L6"/>
    <property type="match status" value="2"/>
</dbReference>
<dbReference type="PIRSF" id="PIRSF002162">
    <property type="entry name" value="Ribosomal_L6"/>
    <property type="match status" value="1"/>
</dbReference>
<dbReference type="PRINTS" id="PR00059">
    <property type="entry name" value="RIBOSOMALL6"/>
</dbReference>
<dbReference type="SUPFAM" id="SSF56053">
    <property type="entry name" value="Ribosomal protein L6"/>
    <property type="match status" value="2"/>
</dbReference>
<dbReference type="PROSITE" id="PS00525">
    <property type="entry name" value="RIBOSOMAL_L6_1"/>
    <property type="match status" value="1"/>
</dbReference>